<proteinExistence type="inferred from homology"/>
<reference key="1">
    <citation type="journal article" date="2007" name="J. Bacteriol.">
        <title>The complete genome sequence of the lactic acid bacterial paradigm Lactococcus lactis subsp. cremoris MG1363.</title>
        <authorList>
            <person name="Wegmann U."/>
            <person name="O'Connell-Motherway M."/>
            <person name="Zomer A."/>
            <person name="Buist G."/>
            <person name="Shearman C."/>
            <person name="Canchaya C."/>
            <person name="Ventura M."/>
            <person name="Goesmann A."/>
            <person name="Gasson M.J."/>
            <person name="Kuipers O.P."/>
            <person name="van Sinderen D."/>
            <person name="Kok J."/>
        </authorList>
    </citation>
    <scope>NUCLEOTIDE SEQUENCE [LARGE SCALE GENOMIC DNA]</scope>
    <source>
        <strain>MG1363</strain>
    </source>
</reference>
<name>RPIA_LACLM</name>
<accession>A2RP28</accession>
<protein>
    <recommendedName>
        <fullName evidence="1">Ribose-5-phosphate isomerase A</fullName>
        <ecNumber evidence="1">5.3.1.6</ecNumber>
    </recommendedName>
    <alternativeName>
        <fullName evidence="1">Phosphoriboisomerase A</fullName>
        <shortName evidence="1">PRI</shortName>
    </alternativeName>
</protein>
<sequence length="224" mass="24364">MENLKKQVGIKAAEFVKSGMVVGLGTGSTAAYFVEELGRRVAEEQLEITGVTTSSVTSEQAKALGIPLASIDEVDYVDLTVDGADEIDSHLNGIKGGGAALLMEKIVATYSKDYIWIVDESKLSENLGSFKVPVEVITYGSEQLFKEFERAAYAPTWRLNEEGEKLITDMQHFIIDLHIAKIENPQKLADELDLMVGVVEHGLFNGMVKKVIVAGSDGVKIISQ</sequence>
<gene>
    <name evidence="1" type="primary">rpiA</name>
    <name type="ordered locus">llmg_2511</name>
</gene>
<organism>
    <name type="scientific">Lactococcus lactis subsp. cremoris (strain MG1363)</name>
    <dbReference type="NCBI Taxonomy" id="416870"/>
    <lineage>
        <taxon>Bacteria</taxon>
        <taxon>Bacillati</taxon>
        <taxon>Bacillota</taxon>
        <taxon>Bacilli</taxon>
        <taxon>Lactobacillales</taxon>
        <taxon>Streptococcaceae</taxon>
        <taxon>Lactococcus</taxon>
        <taxon>Lactococcus cremoris subsp. cremoris</taxon>
    </lineage>
</organism>
<evidence type="ECO:0000255" key="1">
    <source>
        <dbReference type="HAMAP-Rule" id="MF_00170"/>
    </source>
</evidence>
<comment type="function">
    <text evidence="1">Catalyzes the reversible conversion of ribose-5-phosphate to ribulose 5-phosphate.</text>
</comment>
<comment type="catalytic activity">
    <reaction evidence="1">
        <text>aldehydo-D-ribose 5-phosphate = D-ribulose 5-phosphate</text>
        <dbReference type="Rhea" id="RHEA:14657"/>
        <dbReference type="ChEBI" id="CHEBI:58121"/>
        <dbReference type="ChEBI" id="CHEBI:58273"/>
        <dbReference type="EC" id="5.3.1.6"/>
    </reaction>
</comment>
<comment type="pathway">
    <text evidence="1">Carbohydrate degradation; pentose phosphate pathway; D-ribose 5-phosphate from D-ribulose 5-phosphate (non-oxidative stage): step 1/1.</text>
</comment>
<comment type="subunit">
    <text evidence="1">Homodimer.</text>
</comment>
<comment type="similarity">
    <text evidence="1">Belongs to the ribose 5-phosphate isomerase family.</text>
</comment>
<feature type="chain" id="PRO_1000016942" description="Ribose-5-phosphate isomerase A">
    <location>
        <begin position="1"/>
        <end position="224"/>
    </location>
</feature>
<feature type="active site" description="Proton acceptor" evidence="1">
    <location>
        <position position="104"/>
    </location>
</feature>
<feature type="binding site" evidence="1">
    <location>
        <begin position="26"/>
        <end position="29"/>
    </location>
    <ligand>
        <name>substrate</name>
    </ligand>
</feature>
<feature type="binding site" evidence="1">
    <location>
        <begin position="82"/>
        <end position="85"/>
    </location>
    <ligand>
        <name>substrate</name>
    </ligand>
</feature>
<feature type="binding site" evidence="1">
    <location>
        <begin position="95"/>
        <end position="98"/>
    </location>
    <ligand>
        <name>substrate</name>
    </ligand>
</feature>
<feature type="binding site" evidence="1">
    <location>
        <position position="122"/>
    </location>
    <ligand>
        <name>substrate</name>
    </ligand>
</feature>
<dbReference type="EC" id="5.3.1.6" evidence="1"/>
<dbReference type="EMBL" id="AM406671">
    <property type="protein sequence ID" value="CAL99074.1"/>
    <property type="molecule type" value="Genomic_DNA"/>
</dbReference>
<dbReference type="RefSeq" id="WP_011836133.1">
    <property type="nucleotide sequence ID" value="NC_009004.1"/>
</dbReference>
<dbReference type="SMR" id="A2RP28"/>
<dbReference type="STRING" id="416870.llmg_2511"/>
<dbReference type="KEGG" id="llm:llmg_2511"/>
<dbReference type="eggNOG" id="COG0120">
    <property type="taxonomic scope" value="Bacteria"/>
</dbReference>
<dbReference type="HOGENOM" id="CLU_056590_1_0_9"/>
<dbReference type="OrthoDB" id="5870696at2"/>
<dbReference type="PhylomeDB" id="A2RP28"/>
<dbReference type="UniPathway" id="UPA00115">
    <property type="reaction ID" value="UER00412"/>
</dbReference>
<dbReference type="Proteomes" id="UP000000364">
    <property type="component" value="Chromosome"/>
</dbReference>
<dbReference type="GO" id="GO:0004751">
    <property type="term" value="F:ribose-5-phosphate isomerase activity"/>
    <property type="evidence" value="ECO:0007669"/>
    <property type="project" value="UniProtKB-UniRule"/>
</dbReference>
<dbReference type="GO" id="GO:0009052">
    <property type="term" value="P:pentose-phosphate shunt, non-oxidative branch"/>
    <property type="evidence" value="ECO:0007669"/>
    <property type="project" value="UniProtKB-UniRule"/>
</dbReference>
<dbReference type="CDD" id="cd01398">
    <property type="entry name" value="RPI_A"/>
    <property type="match status" value="1"/>
</dbReference>
<dbReference type="FunFam" id="3.40.50.1360:FF:000001">
    <property type="entry name" value="Ribose-5-phosphate isomerase A"/>
    <property type="match status" value="1"/>
</dbReference>
<dbReference type="Gene3D" id="3.30.70.260">
    <property type="match status" value="1"/>
</dbReference>
<dbReference type="Gene3D" id="3.40.50.1360">
    <property type="match status" value="1"/>
</dbReference>
<dbReference type="HAMAP" id="MF_00170">
    <property type="entry name" value="Rib_5P_isom_A"/>
    <property type="match status" value="1"/>
</dbReference>
<dbReference type="InterPro" id="IPR037171">
    <property type="entry name" value="NagB/RpiA_transferase-like"/>
</dbReference>
<dbReference type="InterPro" id="IPR050262">
    <property type="entry name" value="Ribose-5P_isomerase"/>
</dbReference>
<dbReference type="InterPro" id="IPR020672">
    <property type="entry name" value="Ribose5P_isomerase_typA_subgr"/>
</dbReference>
<dbReference type="InterPro" id="IPR004788">
    <property type="entry name" value="Ribose5P_isomerase_type_A"/>
</dbReference>
<dbReference type="NCBIfam" id="NF001924">
    <property type="entry name" value="PRK00702.1"/>
    <property type="match status" value="1"/>
</dbReference>
<dbReference type="NCBIfam" id="TIGR00021">
    <property type="entry name" value="rpiA"/>
    <property type="match status" value="1"/>
</dbReference>
<dbReference type="PANTHER" id="PTHR43748">
    <property type="entry name" value="RIBOSE-5-PHOSPHATE ISOMERASE 3, CHLOROPLASTIC-RELATED"/>
    <property type="match status" value="1"/>
</dbReference>
<dbReference type="PANTHER" id="PTHR43748:SF3">
    <property type="entry name" value="RIBOSE-5-PHOSPHATE ISOMERASE 3, CHLOROPLASTIC-RELATED"/>
    <property type="match status" value="1"/>
</dbReference>
<dbReference type="Pfam" id="PF06026">
    <property type="entry name" value="Rib_5-P_isom_A"/>
    <property type="match status" value="1"/>
</dbReference>
<dbReference type="SUPFAM" id="SSF75445">
    <property type="entry name" value="D-ribose-5-phosphate isomerase (RpiA), lid domain"/>
    <property type="match status" value="1"/>
</dbReference>
<dbReference type="SUPFAM" id="SSF100950">
    <property type="entry name" value="NagB/RpiA/CoA transferase-like"/>
    <property type="match status" value="1"/>
</dbReference>
<keyword id="KW-0413">Isomerase</keyword>